<evidence type="ECO:0000255" key="1">
    <source>
        <dbReference type="HAMAP-Rule" id="MF_01552"/>
    </source>
</evidence>
<reference key="1">
    <citation type="journal article" date="2009" name="BMC Genomics">
        <title>Pseudogene accumulation in the evolutionary histories of Salmonella enterica serovars Paratyphi A and Typhi.</title>
        <authorList>
            <person name="Holt K.E."/>
            <person name="Thomson N.R."/>
            <person name="Wain J."/>
            <person name="Langridge G.C."/>
            <person name="Hasan R."/>
            <person name="Bhutta Z.A."/>
            <person name="Quail M.A."/>
            <person name="Norbertczak H."/>
            <person name="Walker D."/>
            <person name="Simmonds M."/>
            <person name="White B."/>
            <person name="Bason N."/>
            <person name="Mungall K."/>
            <person name="Dougan G."/>
            <person name="Parkhill J."/>
        </authorList>
    </citation>
    <scope>NUCLEOTIDE SEQUENCE [LARGE SCALE GENOMIC DNA]</scope>
    <source>
        <strain>AKU_12601</strain>
    </source>
</reference>
<organism>
    <name type="scientific">Salmonella paratyphi A (strain AKU_12601)</name>
    <dbReference type="NCBI Taxonomy" id="554290"/>
    <lineage>
        <taxon>Bacteria</taxon>
        <taxon>Pseudomonadati</taxon>
        <taxon>Pseudomonadota</taxon>
        <taxon>Gammaproteobacteria</taxon>
        <taxon>Enterobacterales</taxon>
        <taxon>Enterobacteriaceae</taxon>
        <taxon>Salmonella</taxon>
    </lineage>
</organism>
<comment type="function">
    <text evidence="1">An L-glutamate ligase that catalyzes the ATP-dependent post-translational addition of glutamate residues to the C-terminus of ribosomal protein bS6 (RpsF). Is also able to catalyze the synthesis of poly-alpha-glutamate in vitro, via ATP hydrolysis from unprotected glutamate as substrate. The number of glutamate residues added to either RpsF or to poly-alpha-glutamate changes with pH.</text>
</comment>
<comment type="cofactor">
    <cofactor evidence="1">
        <name>Mg(2+)</name>
        <dbReference type="ChEBI" id="CHEBI:18420"/>
    </cofactor>
    <cofactor evidence="1">
        <name>Mn(2+)</name>
        <dbReference type="ChEBI" id="CHEBI:29035"/>
    </cofactor>
    <text evidence="1">Binds 2 magnesium or manganese ions per subunit.</text>
</comment>
<comment type="similarity">
    <text evidence="1">Belongs to the RimK family.</text>
</comment>
<name>RIMK_SALPK</name>
<proteinExistence type="inferred from homology"/>
<accession>B5BBW2</accession>
<sequence>MKIAILSRDGTLYSCKRLREAAMRRGHLVEILDPLSCYMNINPAASSIHYKGRRLPHFDAVIPRIGSAITFYGTAALRQFELLGSYPLNESVAITRARDKLRSLQLLARQGIDLPITGIAHSPDDTSDLIKMVGGAPLVVKLVEGTQGIGVVLAETRQAAESVIDAFRGLNAHILVQEYIAEAKGCDIRCLVVGNEVVAAIERCAKAGDFRSNLHRGGVASIATITPRERDIAIKAAQTLGLDVAGVDILRAARGPLVMEVNASPGLEGIEKTTGVDIAGRMIQWIERHATPEFCLKIGG</sequence>
<keyword id="KW-0067">ATP-binding</keyword>
<keyword id="KW-0436">Ligase</keyword>
<keyword id="KW-0460">Magnesium</keyword>
<keyword id="KW-0464">Manganese</keyword>
<keyword id="KW-0479">Metal-binding</keyword>
<keyword id="KW-0547">Nucleotide-binding</keyword>
<keyword id="KW-0648">Protein biosynthesis</keyword>
<protein>
    <recommendedName>
        <fullName evidence="1">Ribosomal protein bS6--L-glutamate ligase</fullName>
        <ecNumber evidence="1">6.3.2.-</ecNumber>
    </recommendedName>
    <alternativeName>
        <fullName evidence="1">Poly-alpha-glutamate synthase</fullName>
    </alternativeName>
    <alternativeName>
        <fullName evidence="1">Ribosomal protein bS6 modification protein</fullName>
    </alternativeName>
</protein>
<gene>
    <name evidence="1" type="primary">rimK</name>
    <name type="ordered locus">SSPA1757</name>
</gene>
<feature type="chain" id="PRO_1000146947" description="Ribosomal protein bS6--L-glutamate ligase">
    <location>
        <begin position="1"/>
        <end position="300"/>
    </location>
</feature>
<feature type="domain" description="ATP-grasp" evidence="1">
    <location>
        <begin position="104"/>
        <end position="287"/>
    </location>
</feature>
<feature type="binding site" evidence="1">
    <location>
        <position position="141"/>
    </location>
    <ligand>
        <name>ATP</name>
        <dbReference type="ChEBI" id="CHEBI:30616"/>
    </ligand>
</feature>
<feature type="binding site" evidence="1">
    <location>
        <begin position="178"/>
        <end position="179"/>
    </location>
    <ligand>
        <name>ATP</name>
        <dbReference type="ChEBI" id="CHEBI:30616"/>
    </ligand>
</feature>
<feature type="binding site" evidence="1">
    <location>
        <position position="187"/>
    </location>
    <ligand>
        <name>ATP</name>
        <dbReference type="ChEBI" id="CHEBI:30616"/>
    </ligand>
</feature>
<feature type="binding site" evidence="1">
    <location>
        <begin position="211"/>
        <end position="213"/>
    </location>
    <ligand>
        <name>ATP</name>
        <dbReference type="ChEBI" id="CHEBI:30616"/>
    </ligand>
</feature>
<feature type="binding site" evidence="1">
    <location>
        <position position="248"/>
    </location>
    <ligand>
        <name>Mg(2+)</name>
        <dbReference type="ChEBI" id="CHEBI:18420"/>
        <label>1</label>
    </ligand>
</feature>
<feature type="binding site" evidence="1">
    <location>
        <position position="248"/>
    </location>
    <ligand>
        <name>Mn(2+)</name>
        <dbReference type="ChEBI" id="CHEBI:29035"/>
        <label>1</label>
    </ligand>
</feature>
<feature type="binding site" evidence="1">
    <location>
        <position position="260"/>
    </location>
    <ligand>
        <name>Mg(2+)</name>
        <dbReference type="ChEBI" id="CHEBI:18420"/>
        <label>1</label>
    </ligand>
</feature>
<feature type="binding site" evidence="1">
    <location>
        <position position="260"/>
    </location>
    <ligand>
        <name>Mg(2+)</name>
        <dbReference type="ChEBI" id="CHEBI:18420"/>
        <label>2</label>
    </ligand>
</feature>
<feature type="binding site" evidence="1">
    <location>
        <position position="260"/>
    </location>
    <ligand>
        <name>Mn(2+)</name>
        <dbReference type="ChEBI" id="CHEBI:29035"/>
        <label>1</label>
    </ligand>
</feature>
<feature type="binding site" evidence="1">
    <location>
        <position position="260"/>
    </location>
    <ligand>
        <name>Mn(2+)</name>
        <dbReference type="ChEBI" id="CHEBI:29035"/>
        <label>2</label>
    </ligand>
</feature>
<feature type="binding site" evidence="1">
    <location>
        <position position="262"/>
    </location>
    <ligand>
        <name>Mg(2+)</name>
        <dbReference type="ChEBI" id="CHEBI:18420"/>
        <label>2</label>
    </ligand>
</feature>
<feature type="binding site" evidence="1">
    <location>
        <position position="262"/>
    </location>
    <ligand>
        <name>Mn(2+)</name>
        <dbReference type="ChEBI" id="CHEBI:29035"/>
        <label>2</label>
    </ligand>
</feature>
<dbReference type="EC" id="6.3.2.-" evidence="1"/>
<dbReference type="EMBL" id="FM200053">
    <property type="protein sequence ID" value="CAR59951.1"/>
    <property type="molecule type" value="Genomic_DNA"/>
</dbReference>
<dbReference type="RefSeq" id="WP_000684361.1">
    <property type="nucleotide sequence ID" value="NC_011147.1"/>
</dbReference>
<dbReference type="SMR" id="B5BBW2"/>
<dbReference type="KEGG" id="sek:SSPA1757"/>
<dbReference type="HOGENOM" id="CLU_054353_0_1_6"/>
<dbReference type="Proteomes" id="UP000001869">
    <property type="component" value="Chromosome"/>
</dbReference>
<dbReference type="GO" id="GO:0005737">
    <property type="term" value="C:cytoplasm"/>
    <property type="evidence" value="ECO:0007669"/>
    <property type="project" value="TreeGrafter"/>
</dbReference>
<dbReference type="GO" id="GO:0005524">
    <property type="term" value="F:ATP binding"/>
    <property type="evidence" value="ECO:0007669"/>
    <property type="project" value="UniProtKB-UniRule"/>
</dbReference>
<dbReference type="GO" id="GO:0046872">
    <property type="term" value="F:metal ion binding"/>
    <property type="evidence" value="ECO:0007669"/>
    <property type="project" value="UniProtKB-KW"/>
</dbReference>
<dbReference type="GO" id="GO:0018169">
    <property type="term" value="F:ribosomal S6-glutamic acid ligase activity"/>
    <property type="evidence" value="ECO:0007669"/>
    <property type="project" value="UniProtKB-UniRule"/>
</dbReference>
<dbReference type="GO" id="GO:0036211">
    <property type="term" value="P:protein modification process"/>
    <property type="evidence" value="ECO:0007669"/>
    <property type="project" value="InterPro"/>
</dbReference>
<dbReference type="GO" id="GO:0009432">
    <property type="term" value="P:SOS response"/>
    <property type="evidence" value="ECO:0007669"/>
    <property type="project" value="TreeGrafter"/>
</dbReference>
<dbReference type="GO" id="GO:0006412">
    <property type="term" value="P:translation"/>
    <property type="evidence" value="ECO:0007669"/>
    <property type="project" value="UniProtKB-KW"/>
</dbReference>
<dbReference type="FunFam" id="3.40.50.20:FF:000004">
    <property type="entry name" value="Probable alpha-L-glutamate ligase"/>
    <property type="match status" value="1"/>
</dbReference>
<dbReference type="FunFam" id="3.30.1490.20:FF:000005">
    <property type="entry name" value="Probable alpha-L-glutamate ligase 1"/>
    <property type="match status" value="1"/>
</dbReference>
<dbReference type="FunFam" id="3.30.470.20:FF:000016">
    <property type="entry name" value="Ribosomal protein S6--L-glutamate ligase"/>
    <property type="match status" value="1"/>
</dbReference>
<dbReference type="Gene3D" id="3.40.50.20">
    <property type="match status" value="1"/>
</dbReference>
<dbReference type="Gene3D" id="3.30.1490.20">
    <property type="entry name" value="ATP-grasp fold, A domain"/>
    <property type="match status" value="1"/>
</dbReference>
<dbReference type="Gene3D" id="3.30.470.20">
    <property type="entry name" value="ATP-grasp fold, B domain"/>
    <property type="match status" value="1"/>
</dbReference>
<dbReference type="HAMAP" id="MF_01552">
    <property type="entry name" value="RimK"/>
    <property type="match status" value="1"/>
</dbReference>
<dbReference type="InterPro" id="IPR011761">
    <property type="entry name" value="ATP-grasp"/>
</dbReference>
<dbReference type="InterPro" id="IPR013651">
    <property type="entry name" value="ATP-grasp_RimK-type"/>
</dbReference>
<dbReference type="InterPro" id="IPR013815">
    <property type="entry name" value="ATP_grasp_subdomain_1"/>
</dbReference>
<dbReference type="InterPro" id="IPR023533">
    <property type="entry name" value="RimK"/>
</dbReference>
<dbReference type="InterPro" id="IPR041107">
    <property type="entry name" value="Rimk_N"/>
</dbReference>
<dbReference type="InterPro" id="IPR004666">
    <property type="entry name" value="Rp_bS6_RimK/Lys_biosynth_LsyX"/>
</dbReference>
<dbReference type="NCBIfam" id="NF007764">
    <property type="entry name" value="PRK10446.1"/>
    <property type="match status" value="1"/>
</dbReference>
<dbReference type="NCBIfam" id="TIGR00768">
    <property type="entry name" value="rimK_fam"/>
    <property type="match status" value="1"/>
</dbReference>
<dbReference type="PANTHER" id="PTHR21621:SF7">
    <property type="entry name" value="RIBOSOMAL PROTEIN BS6--L-GLUTAMATE LIGASE"/>
    <property type="match status" value="1"/>
</dbReference>
<dbReference type="PANTHER" id="PTHR21621">
    <property type="entry name" value="RIBOSOMAL PROTEIN S6 MODIFICATION PROTEIN"/>
    <property type="match status" value="1"/>
</dbReference>
<dbReference type="Pfam" id="PF08443">
    <property type="entry name" value="RimK"/>
    <property type="match status" value="1"/>
</dbReference>
<dbReference type="Pfam" id="PF18030">
    <property type="entry name" value="Rimk_N"/>
    <property type="match status" value="1"/>
</dbReference>
<dbReference type="SUPFAM" id="SSF56059">
    <property type="entry name" value="Glutathione synthetase ATP-binding domain-like"/>
    <property type="match status" value="1"/>
</dbReference>
<dbReference type="PROSITE" id="PS50975">
    <property type="entry name" value="ATP_GRASP"/>
    <property type="match status" value="1"/>
</dbReference>